<protein>
    <recommendedName>
        <fullName evidence="11">Vancomycin C-type resistance protein VanC1</fullName>
        <ecNumber evidence="6">6.3.2.35</ecNumber>
    </recommendedName>
    <alternativeName>
        <fullName evidence="10">D-alanine--D-serine ligase</fullName>
    </alternativeName>
    <alternativeName>
        <fullName evidence="11">VanC1 ligase</fullName>
    </alternativeName>
</protein>
<sequence>MKKIAVLFGGNSPEYSVSLTSAASVIQAIDPLKYEVMTIGIAPTMDWYWYQGNLANVRNDTWLEDHKNCHQLTFSSQGFILGEKRIVPDVLFPVLHGKYGEDGCIQGLLELMNLPYVGCHVAASALCMNKWLLHQLADTMGIASAPTLLLSRYENDPATIDRFIQDHGFPIFIKPNEAGSSKGITKVTDKTALQSALTTAFAYGSTVLIQKAIAGIEIGCGILGNEQLTIGACDAISLVDGFFDFEEKYQLISATITVPAPLPLALESQIKEQAQLLYRNLGLTGLARIDFFVTNQGAIYLNEINTMPGFTGHSRYPAMMAEVGLSYEILVEQLIALAEEDKR</sequence>
<keyword id="KW-0046">Antibiotic resistance</keyword>
<keyword id="KW-0067">ATP-binding</keyword>
<keyword id="KW-1003">Cell membrane</keyword>
<keyword id="KW-0133">Cell shape</keyword>
<keyword id="KW-0961">Cell wall biogenesis/degradation</keyword>
<keyword id="KW-0436">Ligase</keyword>
<keyword id="KW-0460">Magnesium</keyword>
<keyword id="KW-0464">Manganese</keyword>
<keyword id="KW-0472">Membrane</keyword>
<keyword id="KW-0479">Metal-binding</keyword>
<keyword id="KW-0547">Nucleotide-binding</keyword>
<keyword id="KW-0573">Peptidoglycan synthesis</keyword>
<organism>
    <name type="scientific">Enterococcus gallinarum</name>
    <dbReference type="NCBI Taxonomy" id="1353"/>
    <lineage>
        <taxon>Bacteria</taxon>
        <taxon>Bacillati</taxon>
        <taxon>Bacillota</taxon>
        <taxon>Bacilli</taxon>
        <taxon>Lactobacillales</taxon>
        <taxon>Enterococcaceae</taxon>
        <taxon>Enterococcus</taxon>
    </lineage>
</organism>
<gene>
    <name evidence="11" type="primary">vanC1</name>
    <name evidence="8 10" type="synonym">vanC</name>
    <name evidence="7 9" type="synonym">vanC-1</name>
</gene>
<comment type="function">
    <text evidence="4 5 6">D-alanine--D-alanine ligase of altered specificity, which catalyzes synthesis of D-Ala-D-Ser; produces a peptidoglycan which does not terminate in D-alanine but in D-serine, thus probably reducing affinity for vancomycin (PubMed:8037690). Together with VanT and VanXYC, required for vancomycin resistance in E.gallinarum strain BM4174 (PubMed:1551598, PubMed:15728903, PubMed:8037690).</text>
</comment>
<comment type="catalytic activity">
    <reaction evidence="6">
        <text>D-serine + D-alanine + ATP = D-alanyl-D-serine + ADP + phosphate + H(+)</text>
        <dbReference type="Rhea" id="RHEA:27706"/>
        <dbReference type="ChEBI" id="CHEBI:15378"/>
        <dbReference type="ChEBI" id="CHEBI:30616"/>
        <dbReference type="ChEBI" id="CHEBI:35247"/>
        <dbReference type="ChEBI" id="CHEBI:43474"/>
        <dbReference type="ChEBI" id="CHEBI:57416"/>
        <dbReference type="ChEBI" id="CHEBI:60390"/>
        <dbReference type="ChEBI" id="CHEBI:456216"/>
        <dbReference type="EC" id="6.3.2.35"/>
    </reaction>
</comment>
<comment type="cofactor">
    <cofactor evidence="2">
        <name>Mg(2+)</name>
        <dbReference type="ChEBI" id="CHEBI:18420"/>
    </cofactor>
    <cofactor evidence="2">
        <name>Mn(2+)</name>
        <dbReference type="ChEBI" id="CHEBI:29035"/>
    </cofactor>
    <text evidence="2">Binds 2 Mg(2+) or Mn(2+) ions per subunit.</text>
</comment>
<comment type="subcellular location">
    <subcellularLocation>
        <location evidence="1">Cell membrane</location>
        <topology evidence="11">Peripheral membrane protein</topology>
        <orientation evidence="11">Cytoplasmic side</orientation>
    </subcellularLocation>
</comment>
<comment type="induction">
    <text evidence="3 5">Expression probably regulated by upstream promoter elements (PubMed:10817725, PubMed:15728903). Part of the probable VanC-type operon associated with vancomycin resistance (PubMed:10817725, PubMed:15728903).</text>
</comment>
<comment type="similarity">
    <text evidence="11">Belongs to the D-alanine--D-alanine ligase family.</text>
</comment>
<accession>P29753</accession>
<dbReference type="EC" id="6.3.2.35" evidence="6"/>
<dbReference type="EMBL" id="AF162694">
    <property type="protein sequence ID" value="AAA24786.1"/>
    <property type="molecule type" value="Genomic_DNA"/>
</dbReference>
<dbReference type="PIR" id="JN0249">
    <property type="entry name" value="JN0249"/>
</dbReference>
<dbReference type="RefSeq" id="WP_029487031.1">
    <property type="nucleotide sequence ID" value="NZ_QYOK01000008.1"/>
</dbReference>
<dbReference type="SMR" id="P29753"/>
<dbReference type="CARD" id="ARO:3000368">
    <property type="molecule name" value="vanC"/>
    <property type="mechanism identifier" value="ARO:0001001"/>
    <property type="mechanism name" value="antibiotic target alteration"/>
</dbReference>
<dbReference type="KEGG" id="ag:AAA24786"/>
<dbReference type="BioCyc" id="MetaCyc:MONOMER-15483"/>
<dbReference type="GO" id="GO:0005829">
    <property type="term" value="C:cytosol"/>
    <property type="evidence" value="ECO:0007669"/>
    <property type="project" value="TreeGrafter"/>
</dbReference>
<dbReference type="GO" id="GO:0005886">
    <property type="term" value="C:plasma membrane"/>
    <property type="evidence" value="ECO:0007669"/>
    <property type="project" value="UniProtKB-SubCell"/>
</dbReference>
<dbReference type="GO" id="GO:0005524">
    <property type="term" value="F:ATP binding"/>
    <property type="evidence" value="ECO:0007669"/>
    <property type="project" value="UniProtKB-KW"/>
</dbReference>
<dbReference type="GO" id="GO:0008716">
    <property type="term" value="F:D-alanine-D-alanine ligase activity"/>
    <property type="evidence" value="ECO:0007669"/>
    <property type="project" value="UniProtKB-UniRule"/>
</dbReference>
<dbReference type="GO" id="GO:0160222">
    <property type="term" value="F:D-alanine-D-serine ligase activity"/>
    <property type="evidence" value="ECO:0007669"/>
    <property type="project" value="RHEA"/>
</dbReference>
<dbReference type="GO" id="GO:0046872">
    <property type="term" value="F:metal ion binding"/>
    <property type="evidence" value="ECO:0007669"/>
    <property type="project" value="UniProtKB-KW"/>
</dbReference>
<dbReference type="GO" id="GO:0071555">
    <property type="term" value="P:cell wall organization"/>
    <property type="evidence" value="ECO:0007669"/>
    <property type="project" value="UniProtKB-KW"/>
</dbReference>
<dbReference type="GO" id="GO:0009252">
    <property type="term" value="P:peptidoglycan biosynthetic process"/>
    <property type="evidence" value="ECO:0007669"/>
    <property type="project" value="UniProtKB-UniRule"/>
</dbReference>
<dbReference type="GO" id="GO:0008360">
    <property type="term" value="P:regulation of cell shape"/>
    <property type="evidence" value="ECO:0007669"/>
    <property type="project" value="UniProtKB-KW"/>
</dbReference>
<dbReference type="GO" id="GO:0046677">
    <property type="term" value="P:response to antibiotic"/>
    <property type="evidence" value="ECO:0007669"/>
    <property type="project" value="UniProtKB-KW"/>
</dbReference>
<dbReference type="Gene3D" id="3.40.50.20">
    <property type="match status" value="1"/>
</dbReference>
<dbReference type="Gene3D" id="3.30.1490.20">
    <property type="entry name" value="ATP-grasp fold, A domain"/>
    <property type="match status" value="1"/>
</dbReference>
<dbReference type="Gene3D" id="3.30.470.20">
    <property type="entry name" value="ATP-grasp fold, B domain"/>
    <property type="match status" value="1"/>
</dbReference>
<dbReference type="HAMAP" id="MF_00047">
    <property type="entry name" value="Dala_Dala_lig"/>
    <property type="match status" value="1"/>
</dbReference>
<dbReference type="InterPro" id="IPR011761">
    <property type="entry name" value="ATP-grasp"/>
</dbReference>
<dbReference type="InterPro" id="IPR013815">
    <property type="entry name" value="ATP_grasp_subdomain_1"/>
</dbReference>
<dbReference type="InterPro" id="IPR000291">
    <property type="entry name" value="D-Ala_lig_Van_CS"/>
</dbReference>
<dbReference type="InterPro" id="IPR005905">
    <property type="entry name" value="D_ala_D_ala"/>
</dbReference>
<dbReference type="InterPro" id="IPR011095">
    <property type="entry name" value="Dala_Dala_lig_C"/>
</dbReference>
<dbReference type="InterPro" id="IPR011127">
    <property type="entry name" value="Dala_Dala_lig_N"/>
</dbReference>
<dbReference type="InterPro" id="IPR016185">
    <property type="entry name" value="PreATP-grasp_dom_sf"/>
</dbReference>
<dbReference type="NCBIfam" id="TIGR01205">
    <property type="entry name" value="D_ala_D_alaTIGR"/>
    <property type="match status" value="1"/>
</dbReference>
<dbReference type="NCBIfam" id="NF000207">
    <property type="entry name" value="D_ala_D_ser"/>
    <property type="match status" value="1"/>
</dbReference>
<dbReference type="NCBIfam" id="NF012214">
    <property type="entry name" value="D_ala_D_ser_VanC"/>
    <property type="match status" value="1"/>
</dbReference>
<dbReference type="NCBIfam" id="NF002528">
    <property type="entry name" value="PRK01966.1-4"/>
    <property type="match status" value="1"/>
</dbReference>
<dbReference type="NCBIfam" id="NF012213">
    <property type="entry name" value="VanC1_ser_lig"/>
    <property type="match status" value="1"/>
</dbReference>
<dbReference type="PANTHER" id="PTHR23132">
    <property type="entry name" value="D-ALANINE--D-ALANINE LIGASE"/>
    <property type="match status" value="1"/>
</dbReference>
<dbReference type="PANTHER" id="PTHR23132:SF25">
    <property type="entry name" value="D-ALANINE--D-ALANINE LIGASE A"/>
    <property type="match status" value="1"/>
</dbReference>
<dbReference type="Pfam" id="PF07478">
    <property type="entry name" value="Dala_Dala_lig_C"/>
    <property type="match status" value="1"/>
</dbReference>
<dbReference type="Pfam" id="PF01820">
    <property type="entry name" value="Dala_Dala_lig_N"/>
    <property type="match status" value="1"/>
</dbReference>
<dbReference type="PIRSF" id="PIRSF039102">
    <property type="entry name" value="Ddl/VanB"/>
    <property type="match status" value="1"/>
</dbReference>
<dbReference type="SUPFAM" id="SSF56059">
    <property type="entry name" value="Glutathione synthetase ATP-binding domain-like"/>
    <property type="match status" value="1"/>
</dbReference>
<dbReference type="SUPFAM" id="SSF52440">
    <property type="entry name" value="PreATP-grasp domain"/>
    <property type="match status" value="1"/>
</dbReference>
<dbReference type="PROSITE" id="PS50975">
    <property type="entry name" value="ATP_GRASP"/>
    <property type="match status" value="1"/>
</dbReference>
<dbReference type="PROSITE" id="PS00843">
    <property type="entry name" value="DALA_DALA_LIGASE_1"/>
    <property type="match status" value="1"/>
</dbReference>
<dbReference type="PROSITE" id="PS00844">
    <property type="entry name" value="DALA_DALA_LIGASE_2"/>
    <property type="match status" value="1"/>
</dbReference>
<proteinExistence type="evidence at protein level"/>
<feature type="chain" id="PRO_0000177919" description="Vancomycin C-type resistance protein VanC1">
    <location>
        <begin position="1"/>
        <end position="343"/>
    </location>
</feature>
<feature type="domain" description="ATP-grasp" evidence="2">
    <location>
        <begin position="134"/>
        <end position="336"/>
    </location>
</feature>
<feature type="binding site" evidence="2">
    <location>
        <begin position="164"/>
        <end position="219"/>
    </location>
    <ligand>
        <name>ATP</name>
        <dbReference type="ChEBI" id="CHEBI:30616"/>
    </ligand>
</feature>
<feature type="binding site" evidence="2">
    <location>
        <position position="290"/>
    </location>
    <ligand>
        <name>Mg(2+)</name>
        <dbReference type="ChEBI" id="CHEBI:18420"/>
        <label>1</label>
    </ligand>
</feature>
<feature type="binding site" evidence="2">
    <location>
        <position position="290"/>
    </location>
    <ligand>
        <name>Mn(2+)</name>
        <dbReference type="ChEBI" id="CHEBI:29035"/>
        <label>1</label>
    </ligand>
</feature>
<feature type="binding site" evidence="2">
    <location>
        <position position="303"/>
    </location>
    <ligand>
        <name>Mg(2+)</name>
        <dbReference type="ChEBI" id="CHEBI:18420"/>
        <label>1</label>
    </ligand>
</feature>
<feature type="binding site" evidence="2">
    <location>
        <position position="303"/>
    </location>
    <ligand>
        <name>Mg(2+)</name>
        <dbReference type="ChEBI" id="CHEBI:18420"/>
        <label>2</label>
    </ligand>
</feature>
<feature type="binding site" evidence="2">
    <location>
        <position position="303"/>
    </location>
    <ligand>
        <name>Mn(2+)</name>
        <dbReference type="ChEBI" id="CHEBI:29035"/>
        <label>1</label>
    </ligand>
</feature>
<feature type="binding site" evidence="2">
    <location>
        <position position="303"/>
    </location>
    <ligand>
        <name>Mn(2+)</name>
        <dbReference type="ChEBI" id="CHEBI:29035"/>
        <label>2</label>
    </ligand>
</feature>
<feature type="binding site" evidence="2">
    <location>
        <position position="305"/>
    </location>
    <ligand>
        <name>Mg(2+)</name>
        <dbReference type="ChEBI" id="CHEBI:18420"/>
        <label>2</label>
    </ligand>
</feature>
<feature type="binding site" evidence="2">
    <location>
        <position position="305"/>
    </location>
    <ligand>
        <name>Mn(2+)</name>
        <dbReference type="ChEBI" id="CHEBI:29035"/>
        <label>2</label>
    </ligand>
</feature>
<evidence type="ECO:0000250" key="1">
    <source>
        <dbReference type="UniProtKB" id="P25051"/>
    </source>
</evidence>
<evidence type="ECO:0000255" key="2">
    <source>
        <dbReference type="PROSITE-ProRule" id="PRU00409"/>
    </source>
</evidence>
<evidence type="ECO:0000269" key="3">
    <source>
    </source>
</evidence>
<evidence type="ECO:0000269" key="4">
    <source>
    </source>
</evidence>
<evidence type="ECO:0000269" key="5">
    <source>
    </source>
</evidence>
<evidence type="ECO:0000269" key="6">
    <source>
    </source>
</evidence>
<evidence type="ECO:0000303" key="7">
    <source>
    </source>
</evidence>
<evidence type="ECO:0000303" key="8">
    <source>
    </source>
</evidence>
<evidence type="ECO:0000303" key="9">
    <source>
    </source>
</evidence>
<evidence type="ECO:0000303" key="10">
    <source>
    </source>
</evidence>
<evidence type="ECO:0000305" key="11"/>
<reference key="1">
    <citation type="journal article" date="1992" name="Gene">
        <title>Sequence of the vanC gene of Enterococcus gallinarum BM4174 encoding a D-alanine:D-alanine ligase-related protein necessary for vancomycin resistance.</title>
        <authorList>
            <person name="Dutka-Malen S."/>
            <person name="Molinas C."/>
            <person name="Arthur M."/>
            <person name="Courvalin P."/>
        </authorList>
    </citation>
    <scope>NUCLEOTIDE SEQUENCE [GENOMIC DNA]</scope>
    <scope>FUNCTION</scope>
    <source>
        <strain>BM4174</strain>
    </source>
</reference>
<reference key="2">
    <citation type="journal article" date="1994" name="Biochem. J.">
        <title>Analysis of peptidoglycan precursors in vancomycin-resistant Enterococcus gallinarum BM4174.</title>
        <authorList>
            <person name="Reynolds P.E."/>
            <person name="Snaith H.A."/>
            <person name="Maguire A.J."/>
            <person name="Dutka-Malen S."/>
            <person name="Courvalin P."/>
        </authorList>
    </citation>
    <scope>FUNCTION</scope>
    <scope>CATALYTIC ACTIVITY</scope>
</reference>
<reference key="3">
    <citation type="journal article" date="2000" name="Antimicrob. Agents Chemother.">
        <title>vanC cluster of vancomycin-resistant Enterococcus gallinarum BM4174.</title>
        <authorList>
            <person name="Arias C.A."/>
            <person name="Courvalin P."/>
            <person name="Reynolds P.E."/>
        </authorList>
    </citation>
    <scope>INDUCTION</scope>
</reference>
<reference evidence="11" key="4">
    <citation type="journal article" date="2005" name="Antimicrob. Agents Chemother.">
        <title>Transcriptional analysis of the vanC cluster from Enterococcus gallinarum strains with constitutive and inducible vancomycin resistance.</title>
        <authorList>
            <person name="Panesso D."/>
            <person name="Abadia-Patino L."/>
            <person name="Vanegas N."/>
            <person name="Reynolds P.E."/>
            <person name="Courvalin P."/>
            <person name="Arias C.A."/>
        </authorList>
    </citation>
    <scope>FUNCTION</scope>
    <scope>INDUCTION</scope>
</reference>
<name>VANC1_ENTGA</name>